<reference key="1">
    <citation type="journal article" date="2005" name="Proc. Natl. Acad. Sci. U.S.A.">
        <title>The complete genome sequence of Mycobacterium avium subspecies paratuberculosis.</title>
        <authorList>
            <person name="Li L."/>
            <person name="Bannantine J.P."/>
            <person name="Zhang Q."/>
            <person name="Amonsin A."/>
            <person name="May B.J."/>
            <person name="Alt D."/>
            <person name="Banerji N."/>
            <person name="Kanjilal S."/>
            <person name="Kapur V."/>
        </authorList>
    </citation>
    <scope>NUCLEOTIDE SEQUENCE [LARGE SCALE GENOMIC DNA]</scope>
    <source>
        <strain>ATCC BAA-968 / K-10</strain>
    </source>
</reference>
<comment type="similarity">
    <text evidence="1">Belongs to the bacterial ribosomal protein bL33 family.</text>
</comment>
<organism>
    <name type="scientific">Mycolicibacterium paratuberculosis (strain ATCC BAA-968 / K-10)</name>
    <name type="common">Mycobacterium paratuberculosis</name>
    <dbReference type="NCBI Taxonomy" id="262316"/>
    <lineage>
        <taxon>Bacteria</taxon>
        <taxon>Bacillati</taxon>
        <taxon>Actinomycetota</taxon>
        <taxon>Actinomycetes</taxon>
        <taxon>Mycobacteriales</taxon>
        <taxon>Mycobacteriaceae</taxon>
        <taxon>Mycobacterium</taxon>
        <taxon>Mycobacterium avium complex (MAC)</taxon>
    </lineage>
</organism>
<proteinExistence type="inferred from homology"/>
<gene>
    <name evidence="1" type="primary">rpmG2</name>
    <name type="ordered locus">MAP_4106</name>
</gene>
<accession>Q73SG8</accession>
<name>RL332_MYCPA</name>
<evidence type="ECO:0000255" key="1">
    <source>
        <dbReference type="HAMAP-Rule" id="MF_00294"/>
    </source>
</evidence>
<sequence>MASSTDVRPKITLACEVCKHRNYITKKNRRNDPDRLELKKYCPNCGKHQAHRETR</sequence>
<feature type="chain" id="PRO_0000356554" description="Large ribosomal subunit protein bL33B">
    <location>
        <begin position="1"/>
        <end position="55"/>
    </location>
</feature>
<dbReference type="EMBL" id="AE016958">
    <property type="protein sequence ID" value="AAS06656.1"/>
    <property type="molecule type" value="Genomic_DNA"/>
</dbReference>
<dbReference type="SMR" id="Q73SG8"/>
<dbReference type="STRING" id="262316.MAP_4106"/>
<dbReference type="KEGG" id="mpa:MAP_4106"/>
<dbReference type="eggNOG" id="COG0267">
    <property type="taxonomic scope" value="Bacteria"/>
</dbReference>
<dbReference type="HOGENOM" id="CLU_190949_0_2_11"/>
<dbReference type="Proteomes" id="UP000000580">
    <property type="component" value="Chromosome"/>
</dbReference>
<dbReference type="GO" id="GO:0005737">
    <property type="term" value="C:cytoplasm"/>
    <property type="evidence" value="ECO:0007669"/>
    <property type="project" value="UniProtKB-ARBA"/>
</dbReference>
<dbReference type="GO" id="GO:1990904">
    <property type="term" value="C:ribonucleoprotein complex"/>
    <property type="evidence" value="ECO:0007669"/>
    <property type="project" value="UniProtKB-KW"/>
</dbReference>
<dbReference type="GO" id="GO:0005840">
    <property type="term" value="C:ribosome"/>
    <property type="evidence" value="ECO:0007669"/>
    <property type="project" value="UniProtKB-KW"/>
</dbReference>
<dbReference type="GO" id="GO:0003735">
    <property type="term" value="F:structural constituent of ribosome"/>
    <property type="evidence" value="ECO:0007669"/>
    <property type="project" value="InterPro"/>
</dbReference>
<dbReference type="GO" id="GO:0006412">
    <property type="term" value="P:translation"/>
    <property type="evidence" value="ECO:0007669"/>
    <property type="project" value="UniProtKB-UniRule"/>
</dbReference>
<dbReference type="Gene3D" id="2.20.28.120">
    <property type="entry name" value="Ribosomal protein L33"/>
    <property type="match status" value="1"/>
</dbReference>
<dbReference type="HAMAP" id="MF_00294">
    <property type="entry name" value="Ribosomal_bL33"/>
    <property type="match status" value="1"/>
</dbReference>
<dbReference type="InterPro" id="IPR001705">
    <property type="entry name" value="Ribosomal_bL33"/>
</dbReference>
<dbReference type="InterPro" id="IPR018264">
    <property type="entry name" value="Ribosomal_bL33_CS"/>
</dbReference>
<dbReference type="InterPro" id="IPR038584">
    <property type="entry name" value="Ribosomal_bL33_sf"/>
</dbReference>
<dbReference type="InterPro" id="IPR011332">
    <property type="entry name" value="Ribosomal_zn-bd"/>
</dbReference>
<dbReference type="NCBIfam" id="NF001764">
    <property type="entry name" value="PRK00504.1"/>
    <property type="match status" value="1"/>
</dbReference>
<dbReference type="NCBIfam" id="NF001860">
    <property type="entry name" value="PRK00595.1"/>
    <property type="match status" value="1"/>
</dbReference>
<dbReference type="NCBIfam" id="TIGR01023">
    <property type="entry name" value="rpmG_bact"/>
    <property type="match status" value="1"/>
</dbReference>
<dbReference type="PANTHER" id="PTHR43168">
    <property type="entry name" value="50S RIBOSOMAL PROTEIN L33, CHLOROPLASTIC"/>
    <property type="match status" value="1"/>
</dbReference>
<dbReference type="PANTHER" id="PTHR43168:SF2">
    <property type="entry name" value="LARGE RIBOSOMAL SUBUNIT PROTEIN BL33C"/>
    <property type="match status" value="1"/>
</dbReference>
<dbReference type="Pfam" id="PF00471">
    <property type="entry name" value="Ribosomal_L33"/>
    <property type="match status" value="1"/>
</dbReference>
<dbReference type="SUPFAM" id="SSF57829">
    <property type="entry name" value="Zn-binding ribosomal proteins"/>
    <property type="match status" value="1"/>
</dbReference>
<dbReference type="PROSITE" id="PS00582">
    <property type="entry name" value="RIBOSOMAL_L33"/>
    <property type="match status" value="1"/>
</dbReference>
<protein>
    <recommendedName>
        <fullName evidence="1">Large ribosomal subunit protein bL33B</fullName>
    </recommendedName>
    <alternativeName>
        <fullName evidence="1">50S ribosomal protein L33 2</fullName>
    </alternativeName>
</protein>
<keyword id="KW-1185">Reference proteome</keyword>
<keyword id="KW-0687">Ribonucleoprotein</keyword>
<keyword id="KW-0689">Ribosomal protein</keyword>